<gene>
    <name type="primary">rrp36</name>
    <name type="ORF">Pc20g11810</name>
</gene>
<proteinExistence type="inferred from homology"/>
<dbReference type="EMBL" id="AM920435">
    <property type="protein sequence ID" value="CAP86510.1"/>
    <property type="molecule type" value="Genomic_DNA"/>
</dbReference>
<dbReference type="RefSeq" id="XP_002563667.1">
    <property type="nucleotide sequence ID" value="XM_002563621.1"/>
</dbReference>
<dbReference type="SMR" id="B6HGB5"/>
<dbReference type="STRING" id="500485.B6HGB5"/>
<dbReference type="GeneID" id="8307230"/>
<dbReference type="KEGG" id="pcs:N7525_009565"/>
<dbReference type="VEuPathDB" id="FungiDB:PCH_Pc20g11810"/>
<dbReference type="eggNOG" id="KOG3190">
    <property type="taxonomic scope" value="Eukaryota"/>
</dbReference>
<dbReference type="HOGENOM" id="CLU_048802_0_0_1"/>
<dbReference type="OMA" id="ERKEMPW"/>
<dbReference type="OrthoDB" id="448446at2759"/>
<dbReference type="BioCyc" id="PCHR:PC20G11810-MONOMER"/>
<dbReference type="Proteomes" id="UP000000724">
    <property type="component" value="Contig Pc00c20"/>
</dbReference>
<dbReference type="GO" id="GO:0030686">
    <property type="term" value="C:90S preribosome"/>
    <property type="evidence" value="ECO:0007669"/>
    <property type="project" value="TreeGrafter"/>
</dbReference>
<dbReference type="GO" id="GO:0005730">
    <property type="term" value="C:nucleolus"/>
    <property type="evidence" value="ECO:0007669"/>
    <property type="project" value="UniProtKB-SubCell"/>
</dbReference>
<dbReference type="GO" id="GO:0000462">
    <property type="term" value="P:maturation of SSU-rRNA from tricistronic rRNA transcript (SSU-rRNA, 5.8S rRNA, LSU-rRNA)"/>
    <property type="evidence" value="ECO:0007669"/>
    <property type="project" value="TreeGrafter"/>
</dbReference>
<dbReference type="InterPro" id="IPR009292">
    <property type="entry name" value="RRP36"/>
</dbReference>
<dbReference type="PANTHER" id="PTHR21738">
    <property type="entry name" value="RIBOSOMAL RNA PROCESSING PROTEIN 36 HOMOLOG"/>
    <property type="match status" value="1"/>
</dbReference>
<dbReference type="PANTHER" id="PTHR21738:SF0">
    <property type="entry name" value="RIBOSOMAL RNA PROCESSING PROTEIN 36 HOMOLOG"/>
    <property type="match status" value="1"/>
</dbReference>
<dbReference type="Pfam" id="PF06102">
    <property type="entry name" value="RRP36"/>
    <property type="match status" value="1"/>
</dbReference>
<name>RRP36_PENRW</name>
<keyword id="KW-0175">Coiled coil</keyword>
<keyword id="KW-0539">Nucleus</keyword>
<keyword id="KW-1185">Reference proteome</keyword>
<keyword id="KW-0687">Ribonucleoprotein</keyword>
<keyword id="KW-0690">Ribosome biogenesis</keyword>
<keyword id="KW-0698">rRNA processing</keyword>
<evidence type="ECO:0000250" key="1"/>
<evidence type="ECO:0000255" key="2"/>
<evidence type="ECO:0000256" key="3">
    <source>
        <dbReference type="SAM" id="MobiDB-lite"/>
    </source>
</evidence>
<evidence type="ECO:0000305" key="4"/>
<comment type="function">
    <text evidence="1">Component of the 90S pre-ribosome involved in the maturation of rRNAs. Required for early cleavages of the pre-RNAs in the 40S ribosomal subunit maturation pathway (By similarity).</text>
</comment>
<comment type="subunit">
    <text evidence="1">Associates with 90S and pre-40S pre-ribosomal particles.</text>
</comment>
<comment type="subcellular location">
    <subcellularLocation>
        <location evidence="1">Nucleus</location>
        <location evidence="1">Nucleolus</location>
    </subcellularLocation>
</comment>
<comment type="similarity">
    <text evidence="4">Belongs to the RRP36 family.</text>
</comment>
<organism>
    <name type="scientific">Penicillium rubens (strain ATCC 28089 / DSM 1075 / NRRL 1951 / Wisconsin 54-1255)</name>
    <name type="common">Penicillium chrysogenum</name>
    <dbReference type="NCBI Taxonomy" id="500485"/>
    <lineage>
        <taxon>Eukaryota</taxon>
        <taxon>Fungi</taxon>
        <taxon>Dikarya</taxon>
        <taxon>Ascomycota</taxon>
        <taxon>Pezizomycotina</taxon>
        <taxon>Eurotiomycetes</taxon>
        <taxon>Eurotiomycetidae</taxon>
        <taxon>Eurotiales</taxon>
        <taxon>Aspergillaceae</taxon>
        <taxon>Penicillium</taxon>
        <taxon>Penicillium chrysogenum species complex</taxon>
    </lineage>
</organism>
<accession>B6HGB5</accession>
<sequence>MAISDLLNRRVRARPEDDEVYSEASGSDEGSQDGSDAESNGSIHSQEDDSDAEGDGDDTDADSQSEASNSDIEEEPESEHDDGDDFKASLADISFGALAKAQASMREKNRKDKRTPKDDTASSTVDDIRTKLREAREQKLEAAAKSKSKEKKSRSSKHAPMELSSKRAVTRKRTAVELPPAPRSRDPRFDAAVMGHSGVGKHPHGGKAYAFLDEYRASELNDLKEQMRKTKNLQQKEKLKGEIRRMQDKLRSAQNKKREAEVQAEHKKREKQLIREGKKANPYYLKNSELQKQVLERKYGEMGSRERAKALERRRRKMASKERKEMPWERRGAGGDEDGGAPNGGKRRRLE</sequence>
<reference key="1">
    <citation type="journal article" date="2008" name="Nat. Biotechnol.">
        <title>Genome sequencing and analysis of the filamentous fungus Penicillium chrysogenum.</title>
        <authorList>
            <person name="van den Berg M.A."/>
            <person name="Albang R."/>
            <person name="Albermann K."/>
            <person name="Badger J.H."/>
            <person name="Daran J.-M."/>
            <person name="Driessen A.J.M."/>
            <person name="Garcia-Estrada C."/>
            <person name="Fedorova N.D."/>
            <person name="Harris D.M."/>
            <person name="Heijne W.H.M."/>
            <person name="Joardar V.S."/>
            <person name="Kiel J.A.K.W."/>
            <person name="Kovalchuk A."/>
            <person name="Martin J.F."/>
            <person name="Nierman W.C."/>
            <person name="Nijland J.G."/>
            <person name="Pronk J.T."/>
            <person name="Roubos J.A."/>
            <person name="van der Klei I.J."/>
            <person name="van Peij N.N.M.E."/>
            <person name="Veenhuis M."/>
            <person name="von Doehren H."/>
            <person name="Wagner C."/>
            <person name="Wortman J.R."/>
            <person name="Bovenberg R.A.L."/>
        </authorList>
    </citation>
    <scope>NUCLEOTIDE SEQUENCE [LARGE SCALE GENOMIC DNA]</scope>
    <source>
        <strain>ATCC 28089 / DSM 1075 / NRRL 1951 / Wisconsin 54-1255</strain>
    </source>
</reference>
<feature type="chain" id="PRO_0000397647" description="rRNA biogenesis protein rrp36">
    <location>
        <begin position="1"/>
        <end position="351"/>
    </location>
</feature>
<feature type="region of interest" description="Disordered" evidence="3">
    <location>
        <begin position="1"/>
        <end position="205"/>
    </location>
</feature>
<feature type="region of interest" description="Disordered" evidence="3">
    <location>
        <begin position="248"/>
        <end position="279"/>
    </location>
</feature>
<feature type="region of interest" description="Disordered" evidence="3">
    <location>
        <begin position="296"/>
        <end position="351"/>
    </location>
</feature>
<feature type="coiled-coil region" evidence="2">
    <location>
        <begin position="119"/>
        <end position="152"/>
    </location>
</feature>
<feature type="coiled-coil region" evidence="2">
    <location>
        <begin position="216"/>
        <end position="276"/>
    </location>
</feature>
<feature type="compositionally biased region" description="Low complexity" evidence="3">
    <location>
        <begin position="22"/>
        <end position="39"/>
    </location>
</feature>
<feature type="compositionally biased region" description="Acidic residues" evidence="3">
    <location>
        <begin position="48"/>
        <end position="63"/>
    </location>
</feature>
<feature type="compositionally biased region" description="Acidic residues" evidence="3">
    <location>
        <begin position="71"/>
        <end position="84"/>
    </location>
</feature>
<feature type="compositionally biased region" description="Basic and acidic residues" evidence="3">
    <location>
        <begin position="105"/>
        <end position="144"/>
    </location>
</feature>
<feature type="compositionally biased region" description="Basic residues" evidence="3">
    <location>
        <begin position="146"/>
        <end position="157"/>
    </location>
</feature>
<feature type="compositionally biased region" description="Basic and acidic residues" evidence="3">
    <location>
        <begin position="296"/>
        <end position="311"/>
    </location>
</feature>
<feature type="compositionally biased region" description="Basic and acidic residues" evidence="3">
    <location>
        <begin position="319"/>
        <end position="334"/>
    </location>
</feature>
<protein>
    <recommendedName>
        <fullName>rRNA biogenesis protein rrp36</fullName>
    </recommendedName>
    <alternativeName>
        <fullName>Ribosomal RNA-processing protein 36</fullName>
    </alternativeName>
</protein>